<feature type="chain" id="PRO_0000176183" description="Uracil-DNA glycosylase">
    <location>
        <begin position="1"/>
        <end position="255"/>
    </location>
</feature>
<feature type="active site" description="Proton acceptor" evidence="1">
    <location>
        <position position="91"/>
    </location>
</feature>
<feature type="helix" evidence="3">
    <location>
        <begin position="32"/>
        <end position="38"/>
    </location>
</feature>
<feature type="helix" evidence="3">
    <location>
        <begin position="42"/>
        <end position="59"/>
    </location>
</feature>
<feature type="strand" evidence="3">
    <location>
        <begin position="64"/>
        <end position="66"/>
    </location>
</feature>
<feature type="helix" evidence="3">
    <location>
        <begin position="68"/>
        <end position="70"/>
    </location>
</feature>
<feature type="helix" evidence="3">
    <location>
        <begin position="73"/>
        <end position="75"/>
    </location>
</feature>
<feature type="strand" evidence="3">
    <location>
        <begin position="76"/>
        <end position="78"/>
    </location>
</feature>
<feature type="helix" evidence="3">
    <location>
        <begin position="80"/>
        <end position="82"/>
    </location>
</feature>
<feature type="strand" evidence="3">
    <location>
        <begin position="85"/>
        <end position="91"/>
    </location>
</feature>
<feature type="strand" evidence="3">
    <location>
        <begin position="94"/>
        <end position="96"/>
    </location>
</feature>
<feature type="strand" evidence="3">
    <location>
        <begin position="100"/>
        <end position="103"/>
    </location>
</feature>
<feature type="helix" evidence="3">
    <location>
        <begin position="113"/>
        <end position="125"/>
    </location>
</feature>
<feature type="helix" evidence="3">
    <location>
        <begin position="138"/>
        <end position="142"/>
    </location>
</feature>
<feature type="strand" evidence="3">
    <location>
        <begin position="145"/>
        <end position="151"/>
    </location>
</feature>
<feature type="turn" evidence="3">
    <location>
        <begin position="159"/>
        <end position="164"/>
    </location>
</feature>
<feature type="helix" evidence="3">
    <location>
        <begin position="167"/>
        <end position="181"/>
    </location>
</feature>
<feature type="strand" evidence="3">
    <location>
        <begin position="186"/>
        <end position="190"/>
    </location>
</feature>
<feature type="helix" evidence="3">
    <location>
        <begin position="191"/>
        <end position="195"/>
    </location>
</feature>
<feature type="helix" evidence="3">
    <location>
        <begin position="196"/>
        <end position="200"/>
    </location>
</feature>
<feature type="turn" evidence="3">
    <location>
        <begin position="203"/>
        <end position="205"/>
    </location>
</feature>
<feature type="strand" evidence="3">
    <location>
        <begin position="206"/>
        <end position="211"/>
    </location>
</feature>
<feature type="helix" evidence="3">
    <location>
        <begin position="216"/>
        <end position="218"/>
    </location>
</feature>
<feature type="helix" evidence="3">
    <location>
        <begin position="235"/>
        <end position="245"/>
    </location>
</feature>
<accession>P12888</accession>
<accession>Q777D9</accession>
<proteinExistence type="evidence at protein level"/>
<gene>
    <name type="primary">UNG</name>
    <name type="ORF">BKRF3</name>
</gene>
<comment type="function">
    <text evidence="1">Excises uracil residues from the DNA which can arise as a result of misincorporation of dUMP residues by DNA polymerase or deamination of cytosines. Therefore may reduce deleterious uracil incorporation into the viral genome, particularly in terminally differentiated cells which lack DNA repair enzymes.</text>
</comment>
<comment type="catalytic activity">
    <reaction evidence="1">
        <text>Hydrolyzes single-stranded DNA or mismatched double-stranded DNA and polynucleotides, releasing free uracil.</text>
        <dbReference type="EC" id="3.2.2.27"/>
    </reaction>
</comment>
<comment type="subcellular location">
    <subcellularLocation>
        <location evidence="1">Host nucleus</location>
    </subcellularLocation>
</comment>
<comment type="similarity">
    <text evidence="1">Belongs to the uracil-DNA glycosylase (UDG) superfamily. UNG family.</text>
</comment>
<comment type="sequence caution" evidence="2">
    <conflict type="erroneous initiation">
        <sequence resource="EMBL-CDS" id="CAA24818"/>
    </conflict>
</comment>
<organism>
    <name type="scientific">Epstein-Barr virus (strain B95-8)</name>
    <name type="common">HHV-4</name>
    <name type="synonym">Human herpesvirus 4</name>
    <dbReference type="NCBI Taxonomy" id="10377"/>
    <lineage>
        <taxon>Viruses</taxon>
        <taxon>Duplodnaviria</taxon>
        <taxon>Heunggongvirae</taxon>
        <taxon>Peploviricota</taxon>
        <taxon>Herviviricetes</taxon>
        <taxon>Herpesvirales</taxon>
        <taxon>Orthoherpesviridae</taxon>
        <taxon>Gammaherpesvirinae</taxon>
        <taxon>Lymphocryptovirus</taxon>
        <taxon>Lymphocryptovirus humangamma4</taxon>
        <taxon>Epstein-Barr virus (strain GD1)</taxon>
    </lineage>
</organism>
<reference key="1">
    <citation type="journal article" date="1984" name="Nature">
        <title>DNA sequence and expression of the B95-8 Epstein-Barr virus genome.</title>
        <authorList>
            <person name="Baer R."/>
            <person name="Bankier A.T."/>
            <person name="Biggin M.D."/>
            <person name="Deininger P.L."/>
            <person name="Farrell P.J."/>
            <person name="Gibson T.J."/>
            <person name="Hatfull G."/>
            <person name="Hudson G.S."/>
            <person name="Satchwell S.C."/>
            <person name="Seguin C."/>
            <person name="Tuffnell P.S."/>
            <person name="Barrell B.G."/>
        </authorList>
    </citation>
    <scope>NUCLEOTIDE SEQUENCE [LARGE SCALE GENOMIC DNA]</scope>
</reference>
<reference key="2">
    <citation type="journal article" date="2003" name="Virology">
        <title>Updated Epstein-Barr virus (EBV) DNA sequence and analysis of a promoter for the BART (CST, BARF0) RNAs of EBV.</title>
        <authorList>
            <person name="de Jesus O."/>
            <person name="Smith P.R."/>
            <person name="Spender L.C."/>
            <person name="Elgueta Karstegl C."/>
            <person name="Niller H.H."/>
            <person name="Huang D."/>
            <person name="Farrell P.J."/>
        </authorList>
    </citation>
    <scope>GENOME REANNOTATION</scope>
</reference>
<reference key="3">
    <citation type="journal article" date="2007" name="J. Mol. Biol.">
        <title>New insights on the role of the gamma-herpesvirus uracil-DNA glycosylase leucine loop revealed by the structure of the Epstein-Barr virus enzyme in complex with an inhibitor protein.</title>
        <authorList>
            <person name="Geoui T."/>
            <person name="Buisson M."/>
            <person name="Tarbouriech N."/>
            <person name="Burmeister W.P."/>
        </authorList>
    </citation>
    <scope>X-RAY CRYSTALLOGRAPHY (2.30 ANGSTROMS) OF 25-255</scope>
</reference>
<sequence>MASRGLDLWLDEHVWKRKQEIGVKGENLLLPDLWLDFLQLSPIFQRKLAAVIACVRRLRTQATVYPEEDMCMAWARFCDPSDIKVVILGQDPYHGGQANGLAFSVAYGFPVPPSLRNIYAELHRSLPEFSPPDHGCLDAWASQGVLLLNTILTVQKGKPGSHADIGWAWFTDHVISLLSERLKACVFMLWGAKAGDKASLINSKKHLVLTSQHPSPLAQNSTRKSAQQKFLGNNHFVLANNFLREKGLGEIDWRL</sequence>
<protein>
    <recommendedName>
        <fullName evidence="1">Uracil-DNA glycosylase</fullName>
        <shortName evidence="1">UDG</shortName>
        <ecNumber evidence="1">3.2.2.27</ecNumber>
    </recommendedName>
    <alternativeName>
        <fullName evidence="1">UNG</fullName>
    </alternativeName>
</protein>
<name>UNG_EBVB9</name>
<dbReference type="EC" id="3.2.2.27" evidence="1"/>
<dbReference type="EMBL" id="V01555">
    <property type="protein sequence ID" value="CAA24818.1"/>
    <property type="status" value="ALT_INIT"/>
    <property type="molecule type" value="Genomic_DNA"/>
</dbReference>
<dbReference type="EMBL" id="AJ507799">
    <property type="protein sequence ID" value="CAD53429.1"/>
    <property type="molecule type" value="Genomic_DNA"/>
</dbReference>
<dbReference type="RefSeq" id="YP_401679.1">
    <property type="nucleotide sequence ID" value="NC_007605.1"/>
</dbReference>
<dbReference type="PDB" id="2J8X">
    <property type="method" value="X-ray"/>
    <property type="resolution" value="2.30 A"/>
    <property type="chains" value="A/C=25-255"/>
</dbReference>
<dbReference type="PDB" id="6LYJ">
    <property type="method" value="X-ray"/>
    <property type="resolution" value="2.10 A"/>
    <property type="chains" value="A/B=1-255"/>
</dbReference>
<dbReference type="PDBsum" id="2J8X"/>
<dbReference type="PDBsum" id="6LYJ"/>
<dbReference type="SMR" id="P12888"/>
<dbReference type="IntAct" id="P12888">
    <property type="interactions" value="2"/>
</dbReference>
<dbReference type="MINT" id="P12888"/>
<dbReference type="DNASU" id="3783711"/>
<dbReference type="GeneID" id="3783711"/>
<dbReference type="KEGG" id="vg:3783711"/>
<dbReference type="EvolutionaryTrace" id="P12888"/>
<dbReference type="Proteomes" id="UP000153037">
    <property type="component" value="Segment"/>
</dbReference>
<dbReference type="GO" id="GO:0042025">
    <property type="term" value="C:host cell nucleus"/>
    <property type="evidence" value="ECO:0007669"/>
    <property type="project" value="UniProtKB-SubCell"/>
</dbReference>
<dbReference type="GO" id="GO:0004844">
    <property type="term" value="F:uracil DNA N-glycosylase activity"/>
    <property type="evidence" value="ECO:0007669"/>
    <property type="project" value="UniProtKB-EC"/>
</dbReference>
<dbReference type="GO" id="GO:0097510">
    <property type="term" value="P:base-excision repair, AP site formation via deaminated base removal"/>
    <property type="evidence" value="ECO:0007669"/>
    <property type="project" value="TreeGrafter"/>
</dbReference>
<dbReference type="CDD" id="cd10027">
    <property type="entry name" value="UDG-F1-like"/>
    <property type="match status" value="1"/>
</dbReference>
<dbReference type="Gene3D" id="3.40.470.10">
    <property type="entry name" value="Uracil-DNA glycosylase-like domain"/>
    <property type="match status" value="1"/>
</dbReference>
<dbReference type="HAMAP" id="MF_00148">
    <property type="entry name" value="UDG"/>
    <property type="match status" value="1"/>
</dbReference>
<dbReference type="InterPro" id="IPR002043">
    <property type="entry name" value="UDG_fam1"/>
</dbReference>
<dbReference type="InterPro" id="IPR018085">
    <property type="entry name" value="Ura-DNA_Glyclase_AS"/>
</dbReference>
<dbReference type="InterPro" id="IPR005122">
    <property type="entry name" value="Uracil-DNA_glycosylase-like"/>
</dbReference>
<dbReference type="InterPro" id="IPR036895">
    <property type="entry name" value="Uracil-DNA_glycosylase-like_sf"/>
</dbReference>
<dbReference type="NCBIfam" id="NF003588">
    <property type="entry name" value="PRK05254.1-1"/>
    <property type="match status" value="1"/>
</dbReference>
<dbReference type="NCBIfam" id="NF003589">
    <property type="entry name" value="PRK05254.1-2"/>
    <property type="match status" value="1"/>
</dbReference>
<dbReference type="NCBIfam" id="NF003592">
    <property type="entry name" value="PRK05254.1-5"/>
    <property type="match status" value="1"/>
</dbReference>
<dbReference type="NCBIfam" id="TIGR00628">
    <property type="entry name" value="ung"/>
    <property type="match status" value="1"/>
</dbReference>
<dbReference type="PANTHER" id="PTHR11264">
    <property type="entry name" value="URACIL-DNA GLYCOSYLASE"/>
    <property type="match status" value="1"/>
</dbReference>
<dbReference type="PANTHER" id="PTHR11264:SF0">
    <property type="entry name" value="URACIL-DNA GLYCOSYLASE"/>
    <property type="match status" value="1"/>
</dbReference>
<dbReference type="Pfam" id="PF03167">
    <property type="entry name" value="UDG"/>
    <property type="match status" value="1"/>
</dbReference>
<dbReference type="SMART" id="SM00986">
    <property type="entry name" value="UDG"/>
    <property type="match status" value="1"/>
</dbReference>
<dbReference type="SMART" id="SM00987">
    <property type="entry name" value="UreE_C"/>
    <property type="match status" value="1"/>
</dbReference>
<dbReference type="SUPFAM" id="SSF52141">
    <property type="entry name" value="Uracil-DNA glycosylase-like"/>
    <property type="match status" value="1"/>
</dbReference>
<dbReference type="PROSITE" id="PS00130">
    <property type="entry name" value="U_DNA_GLYCOSYLASE"/>
    <property type="match status" value="1"/>
</dbReference>
<keyword id="KW-0002">3D-structure</keyword>
<keyword id="KW-0227">DNA damage</keyword>
<keyword id="KW-0234">DNA repair</keyword>
<keyword id="KW-1048">Host nucleus</keyword>
<keyword id="KW-0378">Hydrolase</keyword>
<keyword id="KW-1185">Reference proteome</keyword>
<organismHost>
    <name type="scientific">Homo sapiens</name>
    <name type="common">Human</name>
    <dbReference type="NCBI Taxonomy" id="9606"/>
</organismHost>
<evidence type="ECO:0000255" key="1">
    <source>
        <dbReference type="HAMAP-Rule" id="MF_04046"/>
    </source>
</evidence>
<evidence type="ECO:0000305" key="2"/>
<evidence type="ECO:0007829" key="3">
    <source>
        <dbReference type="PDB" id="6LYJ"/>
    </source>
</evidence>